<reference key="1">
    <citation type="journal article" date="1999" name="Curr. Biol.">
        <title>Many human endogenous retrovirus K (HERV-K) proviruses are unique to humans.</title>
        <authorList>
            <person name="Barbulescu M."/>
            <person name="Turner G."/>
            <person name="Seaman M.I."/>
            <person name="Deinard A.S."/>
            <person name="Kidd K.K."/>
            <person name="Lenz J."/>
        </authorList>
    </citation>
    <scope>NUCLEOTIDE SEQUENCE [GENOMIC DNA]</scope>
</reference>
<reference key="2">
    <citation type="journal article" date="2001" name="Genomics">
        <title>Transcriptionally active HERV-K genes: identification, isolation, and chromosomal mapping.</title>
        <authorList>
            <person name="Sugimoto J."/>
            <person name="Matsuura N."/>
            <person name="Kinjo Y."/>
            <person name="Takasu N."/>
            <person name="Oda T."/>
            <person name="Jinno Y."/>
        </authorList>
    </citation>
    <scope>TISSUE SPECIFICITY</scope>
</reference>
<reference key="3">
    <citation type="journal article" date="2003" name="Oncogene">
        <title>Quantitation of HERV-K env gene expression and splicing in human breast cancer.</title>
        <authorList>
            <person name="Wang-Johanning F."/>
            <person name="Frost A.R."/>
            <person name="Jian B."/>
            <person name="Epp L."/>
            <person name="Lu D.W."/>
            <person name="Johanning G.L."/>
        </authorList>
    </citation>
    <scope>SUBGENOMIC RNA</scope>
</reference>
<feature type="chain" id="PRO_0000008526" description="Endogenous retrovirus group K member 7 Env polyprotein">
    <location>
        <begin position="1"/>
        <end position="588"/>
    </location>
</feature>
<feature type="chain" id="PRO_0000008527" description="Surface protein" evidence="1">
    <location>
        <begin position="1"/>
        <end position="354"/>
    </location>
</feature>
<feature type="chain" id="PRO_0000008528" description="Transmembrane protein" evidence="1">
    <location>
        <begin position="355"/>
        <end position="588"/>
    </location>
</feature>
<feature type="transmembrane region" description="Helical" evidence="2">
    <location>
        <begin position="522"/>
        <end position="542"/>
    </location>
</feature>
<feature type="region of interest" description="Fusion peptide" evidence="2">
    <location>
        <begin position="355"/>
        <end position="375"/>
    </location>
</feature>
<feature type="site" description="Cleavage" evidence="1">
    <location>
        <begin position="354"/>
        <end position="355"/>
    </location>
</feature>
<name>ENK7_HUMAN</name>
<dbReference type="EMBL" id="AF164610">
    <property type="status" value="NOT_ANNOTATED_CDS"/>
    <property type="molecule type" value="Genomic_DNA"/>
</dbReference>
<dbReference type="IntAct" id="P61567">
    <property type="interactions" value="1"/>
</dbReference>
<dbReference type="iPTMnet" id="P61567"/>
<dbReference type="PhosphoSitePlus" id="P61567"/>
<dbReference type="BioMuta" id="HGNC:31828"/>
<dbReference type="DMDM" id="47605618"/>
<dbReference type="jPOST" id="P61567"/>
<dbReference type="MassIVE" id="P61567"/>
<dbReference type="PeptideAtlas" id="P61567"/>
<dbReference type="AGR" id="HGNC:31828"/>
<dbReference type="GeneCards" id="ERVK-7"/>
<dbReference type="HGNC" id="HGNC:31828">
    <property type="gene designation" value="ERVK-7"/>
</dbReference>
<dbReference type="MIM" id="614013">
    <property type="type" value="gene"/>
</dbReference>
<dbReference type="neXtProt" id="NX_P61567"/>
<dbReference type="PhylomeDB" id="P61567"/>
<dbReference type="Pharos" id="P61567">
    <property type="development level" value="Tdark"/>
</dbReference>
<dbReference type="Proteomes" id="UP000005640">
    <property type="component" value="Unplaced"/>
</dbReference>
<dbReference type="GO" id="GO:0005886">
    <property type="term" value="C:plasma membrane"/>
    <property type="evidence" value="ECO:0007669"/>
    <property type="project" value="UniProtKB-SubCell"/>
</dbReference>
<dbReference type="GO" id="GO:0005198">
    <property type="term" value="F:structural molecule activity"/>
    <property type="evidence" value="ECO:0007669"/>
    <property type="project" value="InterPro"/>
</dbReference>
<dbReference type="CDD" id="cd09909">
    <property type="entry name" value="HIV-1-like_HR1-HR2"/>
    <property type="match status" value="1"/>
</dbReference>
<dbReference type="InterPro" id="IPR000328">
    <property type="entry name" value="GP41-like"/>
</dbReference>
<dbReference type="InterPro" id="IPR029104">
    <property type="entry name" value="HERV-K_env"/>
</dbReference>
<dbReference type="InterPro" id="IPR051255">
    <property type="entry name" value="Retroviral_env_glycoprotein"/>
</dbReference>
<dbReference type="PANTHER" id="PTHR34313">
    <property type="entry name" value="ENDOGENOUS RETROVIRUS GROUP K MEMBER 113 ENV POLYPROTEIN-RELATED"/>
    <property type="match status" value="1"/>
</dbReference>
<dbReference type="PANTHER" id="PTHR34313:SF3">
    <property type="entry name" value="ENDOGENOUS RETROVIRUS GROUP K MEMBER 113 ENV POLYPROTEIN-RELATED"/>
    <property type="match status" value="1"/>
</dbReference>
<dbReference type="Pfam" id="PF00517">
    <property type="entry name" value="GP41"/>
    <property type="match status" value="1"/>
</dbReference>
<dbReference type="Pfam" id="PF13804">
    <property type="entry name" value="HERV-K_env_2"/>
    <property type="match status" value="1"/>
</dbReference>
<sequence length="588" mass="66649">MVTPVTWMDNPIEIYVNDSVWVPGPIDDRCPAKPEEEGMMINISIGYRYPPICLGRAPGCLMPAVQNWLVEVPTVSPISRFTYHMVSGMSLRPRVNYLQDFSYQRSLKFRPKGKPCPKEIPKESKNTEVLVWEECVANSAVILQNNEFGTIIDWAPRGQFYHNCSGQTQSCPSAQVSPAVDSDLTESLDKHKHKKLQSFYPWEWGEKRISTPRPKIVSPVSGPEHPELWRLTVASHHIRIWSGNQTLETRDCKPFYTIDLNSSLTVPLQSCVKPPYMLVVGNIVIKPDSQTITCENCRLLSCIDSTFNWQHRILLVRAREGVWIPVSMDRPWEASPSVHILTEVLKGVLNRSKRFIFTLIAVIMGLIAVTATAAVAGVALHSSVQSVNFVNDWQKNSTRLWNSQSSIDQKLANQINDLRQTVIWMGDRLMSLEHRFQLQCDWNTSDFCITPQIYNESEHHWDMVRRHLQGREDNLTLDISKLKEQIFEASKAHLNLVPGTEAIAGVADGLANLNPVTWVKTIGSTTIINLILILVCLFCLLLVCRCTQQLRRDSDHRERAMMTMAVLSKRKGGNVGKSKRDQIVTVSV</sequence>
<organism>
    <name type="scientific">Homo sapiens</name>
    <name type="common">Human</name>
    <dbReference type="NCBI Taxonomy" id="9606"/>
    <lineage>
        <taxon>Eukaryota</taxon>
        <taxon>Metazoa</taxon>
        <taxon>Chordata</taxon>
        <taxon>Craniata</taxon>
        <taxon>Vertebrata</taxon>
        <taxon>Euteleostomi</taxon>
        <taxon>Mammalia</taxon>
        <taxon>Eutheria</taxon>
        <taxon>Euarchontoglires</taxon>
        <taxon>Primates</taxon>
        <taxon>Haplorrhini</taxon>
        <taxon>Catarrhini</taxon>
        <taxon>Hominidae</taxon>
        <taxon>Homo</taxon>
    </lineage>
</organism>
<evidence type="ECO:0000250" key="1"/>
<evidence type="ECO:0000255" key="2"/>
<evidence type="ECO:0000269" key="3">
    <source>
    </source>
</evidence>
<evidence type="ECO:0000305" key="4"/>
<comment type="function">
    <text>Retroviral envelope proteins mediate receptor recognition and membrane fusion during early infection. Endogenous envelope proteins may have kept, lost or modified their original function during evolution.</text>
</comment>
<comment type="function">
    <text evidence="1">SU mediates receptor recognition.</text>
</comment>
<comment type="function">
    <text evidence="1">TM anchors the envelope heterodimer to the viral membrane through one transmembrane domain. The other hydrophobic domain, called fusion peptide, mediates fusion of the viral membrane with the target cell membrane (By similarity).</text>
</comment>
<comment type="subunit">
    <text evidence="1">The surface (SU) and transmembrane (TM) proteins form a heterodimer. SU and TM are attached by noncovalent interactions or by a labile interchain disulfide bond (By similarity).</text>
</comment>
<comment type="subcellular location">
    <subcellularLocation>
        <location>Virion</location>
    </subcellularLocation>
</comment>
<comment type="subcellular location">
    <molecule>Transmembrane protein</molecule>
    <subcellularLocation>
        <location evidence="4">Cell membrane</location>
        <topology evidence="4">Single-pass membrane protein</topology>
    </subcellularLocation>
</comment>
<comment type="tissue specificity">
    <text evidence="3">Expressed in lung, placenta, testis and peripheral blood lymphocytes.</text>
</comment>
<comment type="PTM">
    <text evidence="1">Specific enzymatic cleavages in vivo yield the mature SU and TM proteins.</text>
</comment>
<comment type="miscellaneous">
    <text>This envelope protein is encoded by a human specific provirus.</text>
</comment>
<comment type="miscellaneous">
    <text>Has a type 1 genome. The HERV-K(HML-2) family contains type 1 and type 2 genomes depending on the absence or presence of 292 nucleotides at the 5'-end of the env gene resulting in Env proteins of distinct sizes. Despite their overall retroviral envelope structure HERV-K(HML-2) type 1 envelope proteins lack a predictable signal sequence. Subgenomic RNA transcripts coding for full-length envelope proteins have been detected for both type of genomes.</text>
</comment>
<comment type="similarity">
    <text evidence="4">Belongs to the beta type-B retroviral envelope protein family. HERV class-II K(HML-2) env subfamily.</text>
</comment>
<comment type="caution">
    <text evidence="4">No predictable signal peptide.</text>
</comment>
<keyword id="KW-1003">Cell membrane</keyword>
<keyword id="KW-0165">Cleavage on pair of basic residues</keyword>
<keyword id="KW-1015">Disulfide bond</keyword>
<keyword id="KW-0895">ERV</keyword>
<keyword id="KW-0472">Membrane</keyword>
<keyword id="KW-1185">Reference proteome</keyword>
<keyword id="KW-0812">Transmembrane</keyword>
<keyword id="KW-1133">Transmembrane helix</keyword>
<keyword id="KW-0814">Transposable element</keyword>
<keyword id="KW-0261">Viral envelope protein</keyword>
<keyword id="KW-0946">Virion</keyword>
<protein>
    <recommendedName>
        <fullName>Endogenous retrovirus group K member 7 Env polyprotein</fullName>
    </recommendedName>
    <alternativeName>
        <fullName>Envelope polyprotein</fullName>
    </alternativeName>
    <alternativeName>
        <fullName>HERV-K(III) envelope protein</fullName>
    </alternativeName>
    <alternativeName>
        <fullName>HERV-K102 envelope protein</fullName>
    </alternativeName>
    <alternativeName>
        <fullName>HERV-K_1q22 provirus ancestral Env polyprotein</fullName>
    </alternativeName>
    <component>
        <recommendedName>
            <fullName>Surface protein</fullName>
            <shortName>SU</shortName>
        </recommendedName>
    </component>
    <component>
        <recommendedName>
            <fullName>Transmembrane protein</fullName>
            <shortName>TM</shortName>
        </recommendedName>
    </component>
</protein>
<accession>P61567</accession>
<proteinExistence type="evidence at transcript level"/>
<gene>
    <name type="primary">ERVK-7</name>
</gene>